<feature type="chain" id="PRO_0000276999" description="Small ribosomal subunit protein uS3c">
    <location>
        <begin position="1"/>
        <end position="218"/>
    </location>
</feature>
<feature type="domain" description="KH type-2">
    <location>
        <begin position="43"/>
        <end position="118"/>
    </location>
</feature>
<name>RR3_POPAL</name>
<geneLocation type="chloroplast"/>
<dbReference type="EMBL" id="AP008956">
    <property type="protein sequence ID" value="BAE97243.1"/>
    <property type="molecule type" value="Genomic_DNA"/>
</dbReference>
<dbReference type="RefSeq" id="YP_665596.1">
    <property type="nucleotide sequence ID" value="NC_008235.1"/>
</dbReference>
<dbReference type="SMR" id="Q14FB9"/>
<dbReference type="GeneID" id="4178265"/>
<dbReference type="KEGG" id="palz:4178265"/>
<dbReference type="OrthoDB" id="6244at3646"/>
<dbReference type="GO" id="GO:0009507">
    <property type="term" value="C:chloroplast"/>
    <property type="evidence" value="ECO:0007669"/>
    <property type="project" value="UniProtKB-SubCell"/>
</dbReference>
<dbReference type="GO" id="GO:0022627">
    <property type="term" value="C:cytosolic small ribosomal subunit"/>
    <property type="evidence" value="ECO:0007669"/>
    <property type="project" value="TreeGrafter"/>
</dbReference>
<dbReference type="GO" id="GO:0019843">
    <property type="term" value="F:rRNA binding"/>
    <property type="evidence" value="ECO:0007669"/>
    <property type="project" value="UniProtKB-UniRule"/>
</dbReference>
<dbReference type="GO" id="GO:0003735">
    <property type="term" value="F:structural constituent of ribosome"/>
    <property type="evidence" value="ECO:0007669"/>
    <property type="project" value="InterPro"/>
</dbReference>
<dbReference type="GO" id="GO:0006412">
    <property type="term" value="P:translation"/>
    <property type="evidence" value="ECO:0007669"/>
    <property type="project" value="UniProtKB-UniRule"/>
</dbReference>
<dbReference type="CDD" id="cd02412">
    <property type="entry name" value="KH-II_30S_S3"/>
    <property type="match status" value="1"/>
</dbReference>
<dbReference type="FunFam" id="3.30.1140.32:FF:000003">
    <property type="entry name" value="30S ribosomal protein S3, chloroplastic"/>
    <property type="match status" value="1"/>
</dbReference>
<dbReference type="FunFam" id="3.30.300.20:FF:000008">
    <property type="entry name" value="30S ribosomal protein S3, chloroplastic"/>
    <property type="match status" value="1"/>
</dbReference>
<dbReference type="Gene3D" id="3.30.300.20">
    <property type="match status" value="1"/>
</dbReference>
<dbReference type="Gene3D" id="3.30.1140.32">
    <property type="entry name" value="Ribosomal protein S3, C-terminal domain"/>
    <property type="match status" value="1"/>
</dbReference>
<dbReference type="HAMAP" id="MF_01309_B">
    <property type="entry name" value="Ribosomal_uS3_B"/>
    <property type="match status" value="1"/>
</dbReference>
<dbReference type="InterPro" id="IPR015946">
    <property type="entry name" value="KH_dom-like_a/b"/>
</dbReference>
<dbReference type="InterPro" id="IPR004044">
    <property type="entry name" value="KH_dom_type_2"/>
</dbReference>
<dbReference type="InterPro" id="IPR009019">
    <property type="entry name" value="KH_sf_prok-type"/>
</dbReference>
<dbReference type="InterPro" id="IPR036419">
    <property type="entry name" value="Ribosomal_S3_C_sf"/>
</dbReference>
<dbReference type="InterPro" id="IPR005704">
    <property type="entry name" value="Ribosomal_uS3_bac-typ"/>
</dbReference>
<dbReference type="InterPro" id="IPR001351">
    <property type="entry name" value="Ribosomal_uS3_C"/>
</dbReference>
<dbReference type="InterPro" id="IPR018280">
    <property type="entry name" value="Ribosomal_uS3_CS"/>
</dbReference>
<dbReference type="NCBIfam" id="TIGR01009">
    <property type="entry name" value="rpsC_bact"/>
    <property type="match status" value="1"/>
</dbReference>
<dbReference type="PANTHER" id="PTHR11760">
    <property type="entry name" value="30S/40S RIBOSOMAL PROTEIN S3"/>
    <property type="match status" value="1"/>
</dbReference>
<dbReference type="PANTHER" id="PTHR11760:SF19">
    <property type="entry name" value="SMALL RIBOSOMAL SUBUNIT PROTEIN US3C"/>
    <property type="match status" value="1"/>
</dbReference>
<dbReference type="Pfam" id="PF00189">
    <property type="entry name" value="Ribosomal_S3_C"/>
    <property type="match status" value="1"/>
</dbReference>
<dbReference type="SUPFAM" id="SSF54814">
    <property type="entry name" value="Prokaryotic type KH domain (KH-domain type II)"/>
    <property type="match status" value="1"/>
</dbReference>
<dbReference type="SUPFAM" id="SSF54821">
    <property type="entry name" value="Ribosomal protein S3 C-terminal domain"/>
    <property type="match status" value="1"/>
</dbReference>
<dbReference type="PROSITE" id="PS50823">
    <property type="entry name" value="KH_TYPE_2"/>
    <property type="match status" value="1"/>
</dbReference>
<dbReference type="PROSITE" id="PS00548">
    <property type="entry name" value="RIBOSOMAL_S3"/>
    <property type="match status" value="1"/>
</dbReference>
<keyword id="KW-0150">Chloroplast</keyword>
<keyword id="KW-0934">Plastid</keyword>
<keyword id="KW-0687">Ribonucleoprotein</keyword>
<keyword id="KW-0689">Ribosomal protein</keyword>
<keyword id="KW-0694">RNA-binding</keyword>
<keyword id="KW-0699">rRNA-binding</keyword>
<sequence length="218" mass="25192">MGQKINPLGFRLGTTQDHYSLWFAQPKNFSEGLQEDQKIRNCIKNYVQKNMKISSGVEGIGHIEIQKRIDVIQVIIYLGFPKFLTEGKPKRIKELQINVQKELNCMNRKLNISITRIENPYMHPNVLAEFIAGQLKNRVSFRKAMKKAIELTEQSNTKGIQVQIAGRLDGKEIARAEWVREGRVPLQTLRAKINYCSYTVRTIYGVLGIKIWIFVDEE</sequence>
<protein>
    <recommendedName>
        <fullName evidence="2">Small ribosomal subunit protein uS3c</fullName>
    </recommendedName>
    <alternativeName>
        <fullName>30S ribosomal protein S3, chloroplastic</fullName>
    </alternativeName>
</protein>
<evidence type="ECO:0000250" key="1"/>
<evidence type="ECO:0000305" key="2"/>
<reference key="1">
    <citation type="submission" date="2005-03" db="EMBL/GenBank/DDBJ databases">
        <title>Complete structure of the chloroplast genome of Populus alba.</title>
        <authorList>
            <person name="Okumura S."/>
            <person name="Yamashita A."/>
            <person name="Kanamoto H."/>
            <person name="Hattori M."/>
            <person name="Takase H."/>
            <person name="Tomizawa K."/>
        </authorList>
    </citation>
    <scope>NUCLEOTIDE SEQUENCE [LARGE SCALE GENOMIC DNA]</scope>
</reference>
<organism>
    <name type="scientific">Populus alba</name>
    <name type="common">White poplar</name>
    <dbReference type="NCBI Taxonomy" id="43335"/>
    <lineage>
        <taxon>Eukaryota</taxon>
        <taxon>Viridiplantae</taxon>
        <taxon>Streptophyta</taxon>
        <taxon>Embryophyta</taxon>
        <taxon>Tracheophyta</taxon>
        <taxon>Spermatophyta</taxon>
        <taxon>Magnoliopsida</taxon>
        <taxon>eudicotyledons</taxon>
        <taxon>Gunneridae</taxon>
        <taxon>Pentapetalae</taxon>
        <taxon>rosids</taxon>
        <taxon>fabids</taxon>
        <taxon>Malpighiales</taxon>
        <taxon>Salicaceae</taxon>
        <taxon>Saliceae</taxon>
        <taxon>Populus</taxon>
    </lineage>
</organism>
<accession>Q14FB9</accession>
<gene>
    <name type="primary">rps3</name>
</gene>
<comment type="subunit">
    <text evidence="1">Part of the 30S ribosomal subunit.</text>
</comment>
<comment type="subcellular location">
    <subcellularLocation>
        <location>Plastid</location>
        <location>Chloroplast</location>
    </subcellularLocation>
</comment>
<comment type="similarity">
    <text evidence="2">Belongs to the universal ribosomal protein uS3 family.</text>
</comment>
<proteinExistence type="inferred from homology"/>